<feature type="chain" id="PRO_0000105473" description="Beta sliding clamp">
    <location>
        <begin position="1"/>
        <end position="378"/>
    </location>
</feature>
<evidence type="ECO:0000250" key="1">
    <source>
        <dbReference type="UniProtKB" id="P0A988"/>
    </source>
</evidence>
<evidence type="ECO:0000305" key="2"/>
<gene>
    <name type="primary">dnaN</name>
    <name type="ordered locus">spr0002</name>
</gene>
<keyword id="KW-0963">Cytoplasm</keyword>
<keyword id="KW-0235">DNA replication</keyword>
<keyword id="KW-0238">DNA-binding</keyword>
<keyword id="KW-0239">DNA-directed DNA polymerase</keyword>
<keyword id="KW-0548">Nucleotidyltransferase</keyword>
<keyword id="KW-1185">Reference proteome</keyword>
<keyword id="KW-0808">Transferase</keyword>
<comment type="function">
    <text evidence="1">Confers DNA tethering and processivity to DNA polymerases and other proteins. Acts as a clamp, forming a ring around DNA (a reaction catalyzed by the clamp-loading complex) which diffuses in an ATP-independent manner freely and bidirectionally along dsDNA. Initially characterized for its ability to contact the catalytic subunit of DNA polymerase III (Pol III), a complex, multichain enzyme responsible for most of the replicative synthesis in bacteria; Pol III exhibits 3'-5' exonuclease proofreading activity. The beta chain is required for initiation of replication as well as for processivity of DNA replication.</text>
</comment>
<comment type="subunit">
    <text evidence="1">Forms a ring-shaped head-to-tail homodimer around DNA which binds and tethers DNA polymerases and other proteins to the DNA. The DNA replisome complex has a single clamp-loading complex (3 tau and 1 each of delta, delta', psi and chi subunits) which binds 3 Pol III cores (1 core on the leading strand and 2 on the lagging strand) each with a beta sliding clamp dimer. Additional proteins in the replisome are other copies of gamma, psi and chi, Ssb, DNA helicase and RNA primase.</text>
</comment>
<comment type="subcellular location">
    <subcellularLocation>
        <location evidence="1">Cytoplasm</location>
    </subcellularLocation>
</comment>
<comment type="similarity">
    <text evidence="2">Belongs to the beta sliding clamp family.</text>
</comment>
<organism>
    <name type="scientific">Streptococcus pneumoniae (strain ATCC BAA-255 / R6)</name>
    <dbReference type="NCBI Taxonomy" id="171101"/>
    <lineage>
        <taxon>Bacteria</taxon>
        <taxon>Bacillati</taxon>
        <taxon>Bacillota</taxon>
        <taxon>Bacilli</taxon>
        <taxon>Lactobacillales</taxon>
        <taxon>Streptococcaceae</taxon>
        <taxon>Streptococcus</taxon>
    </lineage>
</organism>
<dbReference type="EMBL" id="AE007317">
    <property type="protein sequence ID" value="AAK98806.1"/>
    <property type="molecule type" value="Genomic_DNA"/>
</dbReference>
<dbReference type="RefSeq" id="NP_357596.1">
    <property type="nucleotide sequence ID" value="NC_003098.1"/>
</dbReference>
<dbReference type="RefSeq" id="WP_000581138.1">
    <property type="nucleotide sequence ID" value="NC_003098.1"/>
</dbReference>
<dbReference type="SMR" id="P59651"/>
<dbReference type="STRING" id="171101.spr0002"/>
<dbReference type="KEGG" id="spr:spr0002"/>
<dbReference type="PATRIC" id="fig|171101.6.peg.2"/>
<dbReference type="eggNOG" id="COG0592">
    <property type="taxonomic scope" value="Bacteria"/>
</dbReference>
<dbReference type="HOGENOM" id="CLU_038149_2_0_9"/>
<dbReference type="Proteomes" id="UP000000586">
    <property type="component" value="Chromosome"/>
</dbReference>
<dbReference type="GO" id="GO:0005737">
    <property type="term" value="C:cytoplasm"/>
    <property type="evidence" value="ECO:0007669"/>
    <property type="project" value="UniProtKB-SubCell"/>
</dbReference>
<dbReference type="GO" id="GO:0009360">
    <property type="term" value="C:DNA polymerase III complex"/>
    <property type="evidence" value="ECO:0007669"/>
    <property type="project" value="InterPro"/>
</dbReference>
<dbReference type="GO" id="GO:0008408">
    <property type="term" value="F:3'-5' exonuclease activity"/>
    <property type="evidence" value="ECO:0007669"/>
    <property type="project" value="InterPro"/>
</dbReference>
<dbReference type="GO" id="GO:0003677">
    <property type="term" value="F:DNA binding"/>
    <property type="evidence" value="ECO:0007669"/>
    <property type="project" value="UniProtKB-KW"/>
</dbReference>
<dbReference type="GO" id="GO:0003887">
    <property type="term" value="F:DNA-directed DNA polymerase activity"/>
    <property type="evidence" value="ECO:0007669"/>
    <property type="project" value="UniProtKB-KW"/>
</dbReference>
<dbReference type="GO" id="GO:0006271">
    <property type="term" value="P:DNA strand elongation involved in DNA replication"/>
    <property type="evidence" value="ECO:0000318"/>
    <property type="project" value="GO_Central"/>
</dbReference>
<dbReference type="CDD" id="cd00140">
    <property type="entry name" value="beta_clamp"/>
    <property type="match status" value="1"/>
</dbReference>
<dbReference type="Gene3D" id="3.70.10.10">
    <property type="match status" value="1"/>
</dbReference>
<dbReference type="Gene3D" id="3.10.150.10">
    <property type="entry name" value="DNA Polymerase III, subunit A, domain 2"/>
    <property type="match status" value="1"/>
</dbReference>
<dbReference type="InterPro" id="IPR046938">
    <property type="entry name" value="DNA_clamp_sf"/>
</dbReference>
<dbReference type="InterPro" id="IPR001001">
    <property type="entry name" value="DNA_polIII_beta"/>
</dbReference>
<dbReference type="InterPro" id="IPR022635">
    <property type="entry name" value="DNA_polIII_beta_C"/>
</dbReference>
<dbReference type="InterPro" id="IPR022637">
    <property type="entry name" value="DNA_polIII_beta_cen"/>
</dbReference>
<dbReference type="InterPro" id="IPR022634">
    <property type="entry name" value="DNA_polIII_beta_N"/>
</dbReference>
<dbReference type="NCBIfam" id="TIGR00663">
    <property type="entry name" value="dnan"/>
    <property type="match status" value="1"/>
</dbReference>
<dbReference type="PANTHER" id="PTHR30478:SF0">
    <property type="entry name" value="BETA SLIDING CLAMP"/>
    <property type="match status" value="1"/>
</dbReference>
<dbReference type="PANTHER" id="PTHR30478">
    <property type="entry name" value="DNA POLYMERASE III SUBUNIT BETA"/>
    <property type="match status" value="1"/>
</dbReference>
<dbReference type="Pfam" id="PF00712">
    <property type="entry name" value="DNA_pol3_beta"/>
    <property type="match status" value="1"/>
</dbReference>
<dbReference type="Pfam" id="PF02767">
    <property type="entry name" value="DNA_pol3_beta_2"/>
    <property type="match status" value="1"/>
</dbReference>
<dbReference type="Pfam" id="PF02768">
    <property type="entry name" value="DNA_pol3_beta_3"/>
    <property type="match status" value="1"/>
</dbReference>
<dbReference type="PIRSF" id="PIRSF000804">
    <property type="entry name" value="DNA_pol_III_b"/>
    <property type="match status" value="1"/>
</dbReference>
<dbReference type="SMART" id="SM00480">
    <property type="entry name" value="POL3Bc"/>
    <property type="match status" value="1"/>
</dbReference>
<dbReference type="SUPFAM" id="SSF55979">
    <property type="entry name" value="DNA clamp"/>
    <property type="match status" value="3"/>
</dbReference>
<name>DPO3B_STRR6</name>
<sequence length="378" mass="42071">MIHFSINKNLFLQALNITKRAISSKNAIPILSTVKIDVTNEGVTLIGSNGQISIENFISQKNEDAGLLITSLGSILLEASFFINVVSSLPDVTLDFKEIEQNQIVLTSGKSEITLKGKDSEQYPRIQEISASTPLILETKLLKKIINETAFAASTQESRPILTGVHFVLSQHKELKTVATDSHRLSQKKLTLEKNSDDFDVVIPSRSLREFSAVFTDDIETVEIFFANNQILFRSENISFYTRLLEGNYPDTDRLIPTDFNTTITFNVVNLRQSMERARLLSSATQNGTVKLEIKDGVVSAHVHSPEVGKVNEEIDTDQVTGEDLTISFNPTYLIDSLKALNSEKVTISFISAVRPFTLVPADTDEDFMQLITPVRTN</sequence>
<proteinExistence type="inferred from homology"/>
<accession>P59651</accession>
<protein>
    <recommendedName>
        <fullName>Beta sliding clamp</fullName>
        <shortName>Beta clamp</shortName>
        <shortName>Sliding clamp</shortName>
    </recommendedName>
    <alternativeName>
        <fullName>Beta-clamp processivity factor</fullName>
    </alternativeName>
    <alternativeName>
        <fullName>DNA polymerase III beta sliding clamp subunit</fullName>
    </alternativeName>
    <alternativeName>
        <fullName>DNA polymerase III subunit beta</fullName>
    </alternativeName>
</protein>
<reference key="1">
    <citation type="journal article" date="2001" name="J. Bacteriol.">
        <title>Genome of the bacterium Streptococcus pneumoniae strain R6.</title>
        <authorList>
            <person name="Hoskins J."/>
            <person name="Alborn W.E. Jr."/>
            <person name="Arnold J."/>
            <person name="Blaszczak L.C."/>
            <person name="Burgett S."/>
            <person name="DeHoff B.S."/>
            <person name="Estrem S.T."/>
            <person name="Fritz L."/>
            <person name="Fu D.-J."/>
            <person name="Fuller W."/>
            <person name="Geringer C."/>
            <person name="Gilmour R."/>
            <person name="Glass J.S."/>
            <person name="Khoja H."/>
            <person name="Kraft A.R."/>
            <person name="Lagace R.E."/>
            <person name="LeBlanc D.J."/>
            <person name="Lee L.N."/>
            <person name="Lefkowitz E.J."/>
            <person name="Lu J."/>
            <person name="Matsushima P."/>
            <person name="McAhren S.M."/>
            <person name="McHenney M."/>
            <person name="McLeaster K."/>
            <person name="Mundy C.W."/>
            <person name="Nicas T.I."/>
            <person name="Norris F.H."/>
            <person name="O'Gara M."/>
            <person name="Peery R.B."/>
            <person name="Robertson G.T."/>
            <person name="Rockey P."/>
            <person name="Sun P.-M."/>
            <person name="Winkler M.E."/>
            <person name="Yang Y."/>
            <person name="Young-Bellido M."/>
            <person name="Zhao G."/>
            <person name="Zook C.A."/>
            <person name="Baltz R.H."/>
            <person name="Jaskunas S.R."/>
            <person name="Rosteck P.R. Jr."/>
            <person name="Skatrud P.L."/>
            <person name="Glass J.I."/>
        </authorList>
    </citation>
    <scope>NUCLEOTIDE SEQUENCE [LARGE SCALE GENOMIC DNA]</scope>
    <source>
        <strain>ATCC BAA-255 / R6</strain>
    </source>
</reference>